<feature type="chain" id="PRO_0000387838" description="4-hydroxy-2-oxovalerate aldolase">
    <location>
        <begin position="1"/>
        <end position="345"/>
    </location>
</feature>
<feature type="domain" description="Pyruvate carboxyltransferase" evidence="1">
    <location>
        <begin position="8"/>
        <end position="260"/>
    </location>
</feature>
<feature type="active site" description="Proton acceptor" evidence="1">
    <location>
        <position position="20"/>
    </location>
</feature>
<feature type="binding site" evidence="1">
    <location>
        <begin position="16"/>
        <end position="17"/>
    </location>
    <ligand>
        <name>substrate</name>
    </ligand>
</feature>
<feature type="binding site" evidence="1">
    <location>
        <position position="17"/>
    </location>
    <ligand>
        <name>Mn(2+)</name>
        <dbReference type="ChEBI" id="CHEBI:29035"/>
    </ligand>
</feature>
<feature type="binding site" evidence="1">
    <location>
        <position position="170"/>
    </location>
    <ligand>
        <name>substrate</name>
    </ligand>
</feature>
<feature type="binding site" evidence="1">
    <location>
        <position position="199"/>
    </location>
    <ligand>
        <name>Mn(2+)</name>
        <dbReference type="ChEBI" id="CHEBI:29035"/>
    </ligand>
</feature>
<feature type="binding site" evidence="1">
    <location>
        <position position="199"/>
    </location>
    <ligand>
        <name>substrate</name>
    </ligand>
</feature>
<feature type="binding site" evidence="1">
    <location>
        <position position="201"/>
    </location>
    <ligand>
        <name>Mn(2+)</name>
        <dbReference type="ChEBI" id="CHEBI:29035"/>
    </ligand>
</feature>
<feature type="binding site" evidence="1">
    <location>
        <position position="290"/>
    </location>
    <ligand>
        <name>substrate</name>
    </ligand>
</feature>
<feature type="site" description="Transition state stabilizer" evidence="1">
    <location>
        <position position="16"/>
    </location>
</feature>
<sequence length="345" mass="37020">MTVQGKKITVHDMTLRDGMHPKRHLMTLEQMKNIATGLDEAGVPLIEVTHGDGLGGSSVNYGFPAHSDEEYLGAVIPLMKQAKISALLLPGIGTVEHLHMAKDLGVHTIRVATHCTEADVSEQHITAARKLDMDTVGFLMMAHMASPEKLITQAKLMEGYGANCIYVTDSAGYMLPGDVKLRLEAVRAALRPETELGFHGHHNLAMGVANSVAAVEAGANRIDAAAAGLGAGAGNTPMEVFIAVCDRMGIETGVDVFKIQDVAEDRVVPIMDHIIRVDRDSLTLGYAGVYSSFLLFAKRAEKKYGVSARDILVEMGRRKMVGGQEDMIEDTAITMARERAGCAAA</sequence>
<dbReference type="EC" id="4.1.3.39" evidence="1"/>
<dbReference type="EMBL" id="CP001013">
    <property type="protein sequence ID" value="ACB35598.1"/>
    <property type="molecule type" value="Genomic_DNA"/>
</dbReference>
<dbReference type="RefSeq" id="WP_012348345.1">
    <property type="nucleotide sequence ID" value="NC_010524.1"/>
</dbReference>
<dbReference type="SMR" id="B1Y2E5"/>
<dbReference type="STRING" id="395495.Lcho_3340"/>
<dbReference type="KEGG" id="lch:Lcho_3340"/>
<dbReference type="eggNOG" id="COG0119">
    <property type="taxonomic scope" value="Bacteria"/>
</dbReference>
<dbReference type="HOGENOM" id="CLU_049173_0_0_4"/>
<dbReference type="OrthoDB" id="9803573at2"/>
<dbReference type="Proteomes" id="UP000001693">
    <property type="component" value="Chromosome"/>
</dbReference>
<dbReference type="GO" id="GO:0003852">
    <property type="term" value="F:2-isopropylmalate synthase activity"/>
    <property type="evidence" value="ECO:0007669"/>
    <property type="project" value="TreeGrafter"/>
</dbReference>
<dbReference type="GO" id="GO:0008701">
    <property type="term" value="F:4-hydroxy-2-oxovalerate aldolase activity"/>
    <property type="evidence" value="ECO:0007669"/>
    <property type="project" value="UniProtKB-UniRule"/>
</dbReference>
<dbReference type="GO" id="GO:0030145">
    <property type="term" value="F:manganese ion binding"/>
    <property type="evidence" value="ECO:0007669"/>
    <property type="project" value="UniProtKB-UniRule"/>
</dbReference>
<dbReference type="GO" id="GO:0009056">
    <property type="term" value="P:catabolic process"/>
    <property type="evidence" value="ECO:0007669"/>
    <property type="project" value="UniProtKB-KW"/>
</dbReference>
<dbReference type="GO" id="GO:0009098">
    <property type="term" value="P:L-leucine biosynthetic process"/>
    <property type="evidence" value="ECO:0007669"/>
    <property type="project" value="TreeGrafter"/>
</dbReference>
<dbReference type="CDD" id="cd07943">
    <property type="entry name" value="DRE_TIM_HOA"/>
    <property type="match status" value="1"/>
</dbReference>
<dbReference type="Gene3D" id="1.10.8.60">
    <property type="match status" value="1"/>
</dbReference>
<dbReference type="Gene3D" id="3.20.20.70">
    <property type="entry name" value="Aldolase class I"/>
    <property type="match status" value="1"/>
</dbReference>
<dbReference type="HAMAP" id="MF_01656">
    <property type="entry name" value="HOA"/>
    <property type="match status" value="1"/>
</dbReference>
<dbReference type="InterPro" id="IPR050073">
    <property type="entry name" value="2-IPM_HCS-like"/>
</dbReference>
<dbReference type="InterPro" id="IPR017629">
    <property type="entry name" value="4OH_2_O-val_aldolase"/>
</dbReference>
<dbReference type="InterPro" id="IPR013785">
    <property type="entry name" value="Aldolase_TIM"/>
</dbReference>
<dbReference type="InterPro" id="IPR012425">
    <property type="entry name" value="DmpG_comm"/>
</dbReference>
<dbReference type="InterPro" id="IPR035685">
    <property type="entry name" value="DRE_TIM_HOA"/>
</dbReference>
<dbReference type="InterPro" id="IPR000891">
    <property type="entry name" value="PYR_CT"/>
</dbReference>
<dbReference type="NCBIfam" id="TIGR03217">
    <property type="entry name" value="4OH_2_O_val_ald"/>
    <property type="match status" value="1"/>
</dbReference>
<dbReference type="NCBIfam" id="NF006049">
    <property type="entry name" value="PRK08195.1"/>
    <property type="match status" value="1"/>
</dbReference>
<dbReference type="PANTHER" id="PTHR10277:SF9">
    <property type="entry name" value="2-ISOPROPYLMALATE SYNTHASE 1, CHLOROPLASTIC-RELATED"/>
    <property type="match status" value="1"/>
</dbReference>
<dbReference type="PANTHER" id="PTHR10277">
    <property type="entry name" value="HOMOCITRATE SYNTHASE-RELATED"/>
    <property type="match status" value="1"/>
</dbReference>
<dbReference type="Pfam" id="PF07836">
    <property type="entry name" value="DmpG_comm"/>
    <property type="match status" value="1"/>
</dbReference>
<dbReference type="Pfam" id="PF00682">
    <property type="entry name" value="HMGL-like"/>
    <property type="match status" value="1"/>
</dbReference>
<dbReference type="SUPFAM" id="SSF51569">
    <property type="entry name" value="Aldolase"/>
    <property type="match status" value="1"/>
</dbReference>
<dbReference type="SUPFAM" id="SSF89000">
    <property type="entry name" value="post-HMGL domain-like"/>
    <property type="match status" value="1"/>
</dbReference>
<dbReference type="PROSITE" id="PS50991">
    <property type="entry name" value="PYR_CT"/>
    <property type="match status" value="1"/>
</dbReference>
<organism>
    <name type="scientific">Leptothrix cholodnii (strain ATCC 51168 / LMG 8142 / SP-6)</name>
    <name type="common">Leptothrix discophora (strain SP-6)</name>
    <dbReference type="NCBI Taxonomy" id="395495"/>
    <lineage>
        <taxon>Bacteria</taxon>
        <taxon>Pseudomonadati</taxon>
        <taxon>Pseudomonadota</taxon>
        <taxon>Betaproteobacteria</taxon>
        <taxon>Burkholderiales</taxon>
        <taxon>Sphaerotilaceae</taxon>
        <taxon>Leptothrix</taxon>
    </lineage>
</organism>
<accession>B1Y2E5</accession>
<proteinExistence type="inferred from homology"/>
<name>HOA_LEPCP</name>
<gene>
    <name type="ordered locus">Lcho_3340</name>
</gene>
<protein>
    <recommendedName>
        <fullName evidence="1">4-hydroxy-2-oxovalerate aldolase</fullName>
        <shortName evidence="1">HOA</shortName>
        <ecNumber evidence="1">4.1.3.39</ecNumber>
    </recommendedName>
    <alternativeName>
        <fullName evidence="1">4-hydroxy-2-keto-pentanoic acid aldolase</fullName>
    </alternativeName>
    <alternativeName>
        <fullName evidence="1">4-hydroxy-2-oxopentanoate aldolase</fullName>
    </alternativeName>
</protein>
<keyword id="KW-0058">Aromatic hydrocarbons catabolism</keyword>
<keyword id="KW-0456">Lyase</keyword>
<keyword id="KW-0464">Manganese</keyword>
<keyword id="KW-0479">Metal-binding</keyword>
<keyword id="KW-1185">Reference proteome</keyword>
<comment type="catalytic activity">
    <reaction evidence="1">
        <text>(S)-4-hydroxy-2-oxopentanoate = acetaldehyde + pyruvate</text>
        <dbReference type="Rhea" id="RHEA:22624"/>
        <dbReference type="ChEBI" id="CHEBI:15343"/>
        <dbReference type="ChEBI" id="CHEBI:15361"/>
        <dbReference type="ChEBI" id="CHEBI:73143"/>
        <dbReference type="EC" id="4.1.3.39"/>
    </reaction>
</comment>
<comment type="similarity">
    <text evidence="1">Belongs to the 4-hydroxy-2-oxovalerate aldolase family.</text>
</comment>
<evidence type="ECO:0000255" key="1">
    <source>
        <dbReference type="HAMAP-Rule" id="MF_01656"/>
    </source>
</evidence>
<reference key="1">
    <citation type="submission" date="2008-03" db="EMBL/GenBank/DDBJ databases">
        <title>Complete sequence of Leptothrix cholodnii SP-6.</title>
        <authorList>
            <consortium name="US DOE Joint Genome Institute"/>
            <person name="Copeland A."/>
            <person name="Lucas S."/>
            <person name="Lapidus A."/>
            <person name="Glavina del Rio T."/>
            <person name="Dalin E."/>
            <person name="Tice H."/>
            <person name="Bruce D."/>
            <person name="Goodwin L."/>
            <person name="Pitluck S."/>
            <person name="Chertkov O."/>
            <person name="Brettin T."/>
            <person name="Detter J.C."/>
            <person name="Han C."/>
            <person name="Kuske C.R."/>
            <person name="Schmutz J."/>
            <person name="Larimer F."/>
            <person name="Land M."/>
            <person name="Hauser L."/>
            <person name="Kyrpides N."/>
            <person name="Lykidis A."/>
            <person name="Emerson D."/>
            <person name="Richardson P."/>
        </authorList>
    </citation>
    <scope>NUCLEOTIDE SEQUENCE [LARGE SCALE GENOMIC DNA]</scope>
    <source>
        <strain>ATCC 51168 / LMG 8142 / SP-6</strain>
    </source>
</reference>